<accession>C5WPC2</accession>
<name>ARGJ_SORBI</name>
<reference key="1">
    <citation type="journal article" date="2009" name="Nature">
        <title>The Sorghum bicolor genome and the diversification of grasses.</title>
        <authorList>
            <person name="Paterson A.H."/>
            <person name="Bowers J.E."/>
            <person name="Bruggmann R."/>
            <person name="Dubchak I."/>
            <person name="Grimwood J."/>
            <person name="Gundlach H."/>
            <person name="Haberer G."/>
            <person name="Hellsten U."/>
            <person name="Mitros T."/>
            <person name="Poliakov A."/>
            <person name="Schmutz J."/>
            <person name="Spannagl M."/>
            <person name="Tang H."/>
            <person name="Wang X."/>
            <person name="Wicker T."/>
            <person name="Bharti A.K."/>
            <person name="Chapman J."/>
            <person name="Feltus F.A."/>
            <person name="Gowik U."/>
            <person name="Grigoriev I.V."/>
            <person name="Lyons E."/>
            <person name="Maher C.A."/>
            <person name="Martis M."/>
            <person name="Narechania A."/>
            <person name="Otillar R.P."/>
            <person name="Penning B.W."/>
            <person name="Salamov A.A."/>
            <person name="Wang Y."/>
            <person name="Zhang L."/>
            <person name="Carpita N.C."/>
            <person name="Freeling M."/>
            <person name="Gingle A.R."/>
            <person name="Hash C.T."/>
            <person name="Keller B."/>
            <person name="Klein P."/>
            <person name="Kresovich S."/>
            <person name="McCann M.C."/>
            <person name="Ming R."/>
            <person name="Peterson D.G."/>
            <person name="Mehboob-ur-Rahman M."/>
            <person name="Ware D."/>
            <person name="Westhoff P."/>
            <person name="Mayer K.F.X."/>
            <person name="Messing J."/>
            <person name="Rokhsar D.S."/>
        </authorList>
    </citation>
    <scope>NUCLEOTIDE SEQUENCE [LARGE SCALE GENOMIC DNA]</scope>
    <source>
        <strain>cv. BTx623</strain>
    </source>
</reference>
<reference key="2">
    <citation type="journal article" date="2018" name="Plant J.">
        <title>The Sorghum bicolor reference genome: improved assembly, gene annotations, a transcriptome atlas, and signatures of genome organization.</title>
        <authorList>
            <person name="McCormick R.F."/>
            <person name="Truong S.K."/>
            <person name="Sreedasyam A."/>
            <person name="Jenkins J."/>
            <person name="Shu S."/>
            <person name="Sims D."/>
            <person name="Kennedy M."/>
            <person name="Amirebrahimi M."/>
            <person name="Weers B.D."/>
            <person name="McKinley B."/>
            <person name="Mattison A."/>
            <person name="Morishige D.T."/>
            <person name="Grimwood J."/>
            <person name="Schmutz J."/>
            <person name="Mullet J.E."/>
        </authorList>
    </citation>
    <scope>GENOME REANNOTATION</scope>
    <source>
        <strain>cv. BTx623</strain>
    </source>
</reference>
<gene>
    <name type="ordered locus">Sb01g039230</name>
</gene>
<comment type="function">
    <text evidence="1">Catalyzes two activities which are involved in the cyclic version of arginine biosynthesis: the synthesis of acetylglutamate from glutamate and acetyl-CoA, and of ornithine by transacetylation between acetylornithine and glutamate.</text>
</comment>
<comment type="catalytic activity">
    <reaction evidence="1">
        <text>N(2)-acetyl-L-ornithine + L-glutamate = N-acetyl-L-glutamate + L-ornithine</text>
        <dbReference type="Rhea" id="RHEA:15349"/>
        <dbReference type="ChEBI" id="CHEBI:29985"/>
        <dbReference type="ChEBI" id="CHEBI:44337"/>
        <dbReference type="ChEBI" id="CHEBI:46911"/>
        <dbReference type="ChEBI" id="CHEBI:57805"/>
        <dbReference type="EC" id="2.3.1.35"/>
    </reaction>
</comment>
<comment type="catalytic activity">
    <reaction evidence="1">
        <text>L-glutamate + acetyl-CoA = N-acetyl-L-glutamate + CoA + H(+)</text>
        <dbReference type="Rhea" id="RHEA:24292"/>
        <dbReference type="ChEBI" id="CHEBI:15378"/>
        <dbReference type="ChEBI" id="CHEBI:29985"/>
        <dbReference type="ChEBI" id="CHEBI:44337"/>
        <dbReference type="ChEBI" id="CHEBI:57287"/>
        <dbReference type="ChEBI" id="CHEBI:57288"/>
        <dbReference type="EC" id="2.3.1.1"/>
    </reaction>
</comment>
<comment type="pathway">
    <text evidence="1">Amino-acid biosynthesis; L-arginine biosynthesis; L-ornithine and N-acetyl-L-glutamate from L-glutamate and N(2)-acetyl-L-ornithine (cyclic): step 1/1.</text>
</comment>
<comment type="pathway">
    <text evidence="1">Amino-acid biosynthesis; L-arginine biosynthesis; N(2)-acetyl-L-ornithine from L-glutamate: step 1/4.</text>
</comment>
<comment type="subunit">
    <text evidence="1">Heterodimer of an alpha and a beta chain.</text>
</comment>
<comment type="subcellular location">
    <subcellularLocation>
        <location evidence="1">Plastid</location>
        <location evidence="1">Chloroplast</location>
    </subcellularLocation>
</comment>
<comment type="miscellaneous">
    <text evidence="1">This protein may be expected to contain an N-terminal transit peptide but none has been predicted.</text>
</comment>
<comment type="similarity">
    <text evidence="1">Belongs to the ArgJ family.</text>
</comment>
<sequence>MPPPSLLHLHSRAPLQPRPFRMNSRAAPSRVVVCSVASAEGFISAAPILLPDGPWKQVEGGVTAAKGFKAAGIYGGLRAKGEKPDLALVTCDVDATVAGTFTTNVVAAAPVLYCKHALSTSKTGRAVLINAGQANAATGDLGYQDAVDSADAVAKLLNVSTDNILIQSTGVIGQRIKKEALLNSLPRLVGSLSSSVQGANSAAVAITTTDLVSKSIAVQTEIGGVAIRIGGMAKGSGMIHPNMATMLGVLTTDAQVSNDVWREMVRTSVSRSFNQITVDGDTSTNDCVIAMASGLSGLSRIQSLDSIEAQQFQACLDAVMQGLAKSIAWDGEGATCLIEVTVSGANNEAEAAKIARSVASSSLVKAAVFGRDPNWGRIACSVGYSGIQFDANRLDISLGVIPLMKNGQPLPFDRSAASRYLKDAGDAHGTVNIDISVGSGGGNGKAWGCDLSYKYVEINAEYTT</sequence>
<proteinExistence type="inferred from homology"/>
<dbReference type="EC" id="2.3.1.35" evidence="1"/>
<dbReference type="EC" id="2.3.1.1" evidence="1"/>
<dbReference type="EMBL" id="CM000760">
    <property type="protein sequence ID" value="EER92456.1"/>
    <property type="molecule type" value="Genomic_DNA"/>
</dbReference>
<dbReference type="RefSeq" id="XP_002465458.1">
    <property type="nucleotide sequence ID" value="XM_002465413.1"/>
</dbReference>
<dbReference type="SMR" id="C5WPC2"/>
<dbReference type="FunCoup" id="C5WPC2">
    <property type="interactions" value="1055"/>
</dbReference>
<dbReference type="STRING" id="4558.C5WPC2"/>
<dbReference type="MEROPS" id="T05.002"/>
<dbReference type="EnsemblPlants" id="EER92456">
    <property type="protein sequence ID" value="EER92456"/>
    <property type="gene ID" value="SORBI_3001G416700"/>
</dbReference>
<dbReference type="Gramene" id="EER92456">
    <property type="protein sequence ID" value="EER92456"/>
    <property type="gene ID" value="SORBI_3001G416700"/>
</dbReference>
<dbReference type="KEGG" id="sbi:8081475"/>
<dbReference type="eggNOG" id="KOG2786">
    <property type="taxonomic scope" value="Eukaryota"/>
</dbReference>
<dbReference type="HOGENOM" id="CLU_027172_1_1_1"/>
<dbReference type="InParanoid" id="C5WPC2"/>
<dbReference type="OMA" id="WGRIVMA"/>
<dbReference type="OrthoDB" id="2017946at2759"/>
<dbReference type="UniPathway" id="UPA00068">
    <property type="reaction ID" value="UER00106"/>
</dbReference>
<dbReference type="UniPathway" id="UPA00068">
    <property type="reaction ID" value="UER00111"/>
</dbReference>
<dbReference type="Proteomes" id="UP000000768">
    <property type="component" value="Chromosome 1"/>
</dbReference>
<dbReference type="GO" id="GO:0009507">
    <property type="term" value="C:chloroplast"/>
    <property type="evidence" value="ECO:0007669"/>
    <property type="project" value="UniProtKB-SubCell"/>
</dbReference>
<dbReference type="GO" id="GO:0004358">
    <property type="term" value="F:glutamate N-acetyltransferase activity"/>
    <property type="evidence" value="ECO:0007669"/>
    <property type="project" value="UniProtKB-UniRule"/>
</dbReference>
<dbReference type="GO" id="GO:0004042">
    <property type="term" value="F:L-glutamate N-acetyltransferase activity"/>
    <property type="evidence" value="ECO:0000318"/>
    <property type="project" value="GO_Central"/>
</dbReference>
<dbReference type="GO" id="GO:0006526">
    <property type="term" value="P:L-arginine biosynthetic process"/>
    <property type="evidence" value="ECO:0007669"/>
    <property type="project" value="UniProtKB-UniRule"/>
</dbReference>
<dbReference type="GO" id="GO:0006592">
    <property type="term" value="P:ornithine biosynthetic process"/>
    <property type="evidence" value="ECO:0000318"/>
    <property type="project" value="GO_Central"/>
</dbReference>
<dbReference type="CDD" id="cd02152">
    <property type="entry name" value="OAT"/>
    <property type="match status" value="1"/>
</dbReference>
<dbReference type="FunFam" id="3.10.20.340:FF:000001">
    <property type="entry name" value="Arginine biosynthesis bifunctional protein ArgJ, chloroplastic"/>
    <property type="match status" value="1"/>
</dbReference>
<dbReference type="FunFam" id="3.60.70.12:FF:000001">
    <property type="entry name" value="Arginine biosynthesis bifunctional protein ArgJ, chloroplastic"/>
    <property type="match status" value="1"/>
</dbReference>
<dbReference type="Gene3D" id="3.10.20.340">
    <property type="entry name" value="ArgJ beta chain, C-terminal domain"/>
    <property type="match status" value="1"/>
</dbReference>
<dbReference type="Gene3D" id="3.60.70.12">
    <property type="entry name" value="L-amino peptidase D-ALA esterase/amidase"/>
    <property type="match status" value="1"/>
</dbReference>
<dbReference type="HAMAP" id="MF_01106">
    <property type="entry name" value="ArgJ"/>
    <property type="match status" value="1"/>
</dbReference>
<dbReference type="InterPro" id="IPR002813">
    <property type="entry name" value="Arg_biosynth_ArgJ"/>
</dbReference>
<dbReference type="InterPro" id="IPR016117">
    <property type="entry name" value="ArgJ-like_dom_sf"/>
</dbReference>
<dbReference type="InterPro" id="IPR042195">
    <property type="entry name" value="ArgJ_beta_C"/>
</dbReference>
<dbReference type="NCBIfam" id="TIGR00120">
    <property type="entry name" value="ArgJ"/>
    <property type="match status" value="1"/>
</dbReference>
<dbReference type="NCBIfam" id="NF003802">
    <property type="entry name" value="PRK05388.1"/>
    <property type="match status" value="1"/>
</dbReference>
<dbReference type="PANTHER" id="PTHR23100">
    <property type="entry name" value="ARGININE BIOSYNTHESIS BIFUNCTIONAL PROTEIN ARGJ"/>
    <property type="match status" value="1"/>
</dbReference>
<dbReference type="PANTHER" id="PTHR23100:SF0">
    <property type="entry name" value="ARGININE BIOSYNTHESIS BIFUNCTIONAL PROTEIN ARGJ, MITOCHONDRIAL"/>
    <property type="match status" value="1"/>
</dbReference>
<dbReference type="Pfam" id="PF01960">
    <property type="entry name" value="ArgJ"/>
    <property type="match status" value="1"/>
</dbReference>
<dbReference type="SUPFAM" id="SSF56266">
    <property type="entry name" value="DmpA/ArgJ-like"/>
    <property type="match status" value="1"/>
</dbReference>
<protein>
    <recommendedName>
        <fullName evidence="1">Arginine biosynthesis bifunctional protein ArgJ, chloroplastic</fullName>
    </recommendedName>
    <domain>
        <recommendedName>
            <fullName evidence="1">Glutamate N-acetyltransferase</fullName>
            <shortName evidence="1">GAT</shortName>
            <ecNumber evidence="1">2.3.1.35</ecNumber>
        </recommendedName>
        <alternativeName>
            <fullName evidence="1">Ornithine acetyltransferase</fullName>
            <shortName evidence="1">OATase</shortName>
        </alternativeName>
        <alternativeName>
            <fullName evidence="1">Ornithine transacetylase</fullName>
        </alternativeName>
    </domain>
    <domain>
        <recommendedName>
            <fullName evidence="1">Amino-acid acetyltransferase</fullName>
            <ecNumber evidence="1">2.3.1.1</ecNumber>
        </recommendedName>
        <alternativeName>
            <fullName evidence="1">N-acetylglutamate synthase</fullName>
            <shortName evidence="1">AGS</shortName>
        </alternativeName>
    </domain>
    <component>
        <recommendedName>
            <fullName evidence="1">Arginine biosynthesis bifunctional protein ArgJ alpha chain</fullName>
        </recommendedName>
    </component>
    <component>
        <recommendedName>
            <fullName evidence="1">Arginine biosynthesis bifunctional protein ArgJ beta chain</fullName>
        </recommendedName>
    </component>
</protein>
<evidence type="ECO:0000255" key="1">
    <source>
        <dbReference type="HAMAP-Rule" id="MF_03124"/>
    </source>
</evidence>
<organism>
    <name type="scientific">Sorghum bicolor</name>
    <name type="common">Sorghum</name>
    <name type="synonym">Sorghum vulgare</name>
    <dbReference type="NCBI Taxonomy" id="4558"/>
    <lineage>
        <taxon>Eukaryota</taxon>
        <taxon>Viridiplantae</taxon>
        <taxon>Streptophyta</taxon>
        <taxon>Embryophyta</taxon>
        <taxon>Tracheophyta</taxon>
        <taxon>Spermatophyta</taxon>
        <taxon>Magnoliopsida</taxon>
        <taxon>Liliopsida</taxon>
        <taxon>Poales</taxon>
        <taxon>Poaceae</taxon>
        <taxon>PACMAD clade</taxon>
        <taxon>Panicoideae</taxon>
        <taxon>Andropogonodae</taxon>
        <taxon>Andropogoneae</taxon>
        <taxon>Sorghinae</taxon>
        <taxon>Sorghum</taxon>
    </lineage>
</organism>
<feature type="chain" id="PRO_0000397990" description="Arginine biosynthesis bifunctional protein ArgJ alpha chain" evidence="1">
    <location>
        <begin position="1"/>
        <end position="244"/>
    </location>
</feature>
<feature type="chain" id="PRO_0000397991" description="Arginine biosynthesis bifunctional protein ArgJ beta chain" evidence="1">
    <location>
        <begin position="245"/>
        <end position="464"/>
    </location>
</feature>
<feature type="active site" description="Nucleophile" evidence="1">
    <location>
        <position position="245"/>
    </location>
</feature>
<feature type="binding site" evidence="1">
    <location>
        <position position="208"/>
    </location>
    <ligand>
        <name>substrate</name>
    </ligand>
</feature>
<feature type="binding site" evidence="1">
    <location>
        <position position="234"/>
    </location>
    <ligand>
        <name>substrate</name>
    </ligand>
</feature>
<feature type="binding site" evidence="1">
    <location>
        <position position="245"/>
    </location>
    <ligand>
        <name>substrate</name>
    </ligand>
</feature>
<feature type="binding site" evidence="1">
    <location>
        <position position="332"/>
    </location>
    <ligand>
        <name>substrate</name>
    </ligand>
</feature>
<feature type="binding site" evidence="1">
    <location>
        <position position="459"/>
    </location>
    <ligand>
        <name>substrate</name>
    </ligand>
</feature>
<feature type="binding site" evidence="1">
    <location>
        <position position="464"/>
    </location>
    <ligand>
        <name>substrate</name>
    </ligand>
</feature>
<feature type="site" description="Involved in the stabilization of negative charge on the oxyanion by the formation of the oxyanion hole" evidence="1">
    <location>
        <position position="169"/>
    </location>
</feature>
<feature type="site" description="Involved in the stabilization of negative charge on the oxyanion by the formation of the oxyanion hole" evidence="1">
    <location>
        <position position="170"/>
    </location>
</feature>
<feature type="site" description="Cleavage; by autolysis" evidence="1">
    <location>
        <begin position="244"/>
        <end position="245"/>
    </location>
</feature>
<keyword id="KW-0012">Acyltransferase</keyword>
<keyword id="KW-0028">Amino-acid biosynthesis</keyword>
<keyword id="KW-0055">Arginine biosynthesis</keyword>
<keyword id="KW-0068">Autocatalytic cleavage</keyword>
<keyword id="KW-0150">Chloroplast</keyword>
<keyword id="KW-0511">Multifunctional enzyme</keyword>
<keyword id="KW-0934">Plastid</keyword>
<keyword id="KW-1185">Reference proteome</keyword>
<keyword id="KW-0808">Transferase</keyword>